<name>SYP_SYNSC</name>
<keyword id="KW-0030">Aminoacyl-tRNA synthetase</keyword>
<keyword id="KW-0067">ATP-binding</keyword>
<keyword id="KW-0963">Cytoplasm</keyword>
<keyword id="KW-0436">Ligase</keyword>
<keyword id="KW-0547">Nucleotide-binding</keyword>
<keyword id="KW-0648">Protein biosynthesis</keyword>
<organism>
    <name type="scientific">Synechococcus sp. (strain CC9605)</name>
    <dbReference type="NCBI Taxonomy" id="110662"/>
    <lineage>
        <taxon>Bacteria</taxon>
        <taxon>Bacillati</taxon>
        <taxon>Cyanobacteriota</taxon>
        <taxon>Cyanophyceae</taxon>
        <taxon>Synechococcales</taxon>
        <taxon>Synechococcaceae</taxon>
        <taxon>Synechococcus</taxon>
    </lineage>
</organism>
<feature type="chain" id="PRO_0000248793" description="Proline--tRNA ligase">
    <location>
        <begin position="1"/>
        <end position="593"/>
    </location>
</feature>
<proteinExistence type="inferred from homology"/>
<evidence type="ECO:0000255" key="1">
    <source>
        <dbReference type="HAMAP-Rule" id="MF_01569"/>
    </source>
</evidence>
<accession>Q3ALR5</accession>
<sequence length="593" mass="65610">MRVSRLLLVTLRDVPAEAEITSHQLLLRAGYIRRVGSGIYAYLPLMWRVLQKITAVVREEMNRAGAQETLLPQLHPAELWQKSGRWQGYTAGEGIMFHLEDRQGRELGLGPTHEEVITSLAGELLRSYRQLPVNLYQIQTKFRDEIRPRFGLMRGREFIMKDAYSFHASEADLRETYGAMDQAYRRIFERCGLDAVPVDADSGAIGGAASQEFMVTADAGEDLILISDDGQYAANLEKAVSIPSAASPLPDGPEESIPTPGLGSIESLCDTKCWDPSQVVKVLLFVATLDDETLQPLLVSLRGDQELNPTKVVNAVSRTLNKGVLDCRPITPDYTNRQQIDPIPFGSIGPDLSDDVLKGAKTWQPTFLRLADETASELGSFICGANQPDLHRFNTSWTAIEQKPTTLDLRNARAGDVCQHNLESRLTEKRGIEVGHIFQLGRKYSEAMESGFTNENGKTEPFWMGCYGIGVSRLAQAAVEQHHDDSGICWPTAIAPFEAIVVVANIQDDTQGQLGEALYAELQAADVDVLLDDRKERAGVKFKDADLIGIPWRIVVGRDASEGIVELVRRSSREVRKLPHAEAVSCLIKALHP</sequence>
<protein>
    <recommendedName>
        <fullName evidence="1">Proline--tRNA ligase</fullName>
        <ecNumber evidence="1">6.1.1.15</ecNumber>
    </recommendedName>
    <alternativeName>
        <fullName evidence="1">Prolyl-tRNA synthetase</fullName>
        <shortName evidence="1">ProRS</shortName>
    </alternativeName>
</protein>
<gene>
    <name evidence="1" type="primary">proS</name>
    <name type="ordered locus">Syncc9605_0693</name>
</gene>
<dbReference type="EC" id="6.1.1.15" evidence="1"/>
<dbReference type="EMBL" id="CP000110">
    <property type="protein sequence ID" value="ABB34467.1"/>
    <property type="molecule type" value="Genomic_DNA"/>
</dbReference>
<dbReference type="RefSeq" id="WP_011363695.1">
    <property type="nucleotide sequence ID" value="NC_007516.1"/>
</dbReference>
<dbReference type="SMR" id="Q3ALR5"/>
<dbReference type="STRING" id="110662.Syncc9605_0693"/>
<dbReference type="KEGG" id="syd:Syncc9605_0693"/>
<dbReference type="eggNOG" id="COG0442">
    <property type="taxonomic scope" value="Bacteria"/>
</dbReference>
<dbReference type="HOGENOM" id="CLU_016739_0_0_3"/>
<dbReference type="OrthoDB" id="9809052at2"/>
<dbReference type="GO" id="GO:0005829">
    <property type="term" value="C:cytosol"/>
    <property type="evidence" value="ECO:0007669"/>
    <property type="project" value="TreeGrafter"/>
</dbReference>
<dbReference type="GO" id="GO:0002161">
    <property type="term" value="F:aminoacyl-tRNA deacylase activity"/>
    <property type="evidence" value="ECO:0007669"/>
    <property type="project" value="InterPro"/>
</dbReference>
<dbReference type="GO" id="GO:0005524">
    <property type="term" value="F:ATP binding"/>
    <property type="evidence" value="ECO:0007669"/>
    <property type="project" value="UniProtKB-UniRule"/>
</dbReference>
<dbReference type="GO" id="GO:0004827">
    <property type="term" value="F:proline-tRNA ligase activity"/>
    <property type="evidence" value="ECO:0007669"/>
    <property type="project" value="UniProtKB-UniRule"/>
</dbReference>
<dbReference type="GO" id="GO:0006433">
    <property type="term" value="P:prolyl-tRNA aminoacylation"/>
    <property type="evidence" value="ECO:0007669"/>
    <property type="project" value="UniProtKB-UniRule"/>
</dbReference>
<dbReference type="CDD" id="cd04334">
    <property type="entry name" value="ProRS-INS"/>
    <property type="match status" value="1"/>
</dbReference>
<dbReference type="CDD" id="cd00861">
    <property type="entry name" value="ProRS_anticodon_short"/>
    <property type="match status" value="1"/>
</dbReference>
<dbReference type="CDD" id="cd00779">
    <property type="entry name" value="ProRS_core_prok"/>
    <property type="match status" value="1"/>
</dbReference>
<dbReference type="FunFam" id="3.40.50.800:FF:000011">
    <property type="entry name" value="Proline--tRNA ligase"/>
    <property type="match status" value="1"/>
</dbReference>
<dbReference type="Gene3D" id="3.40.50.800">
    <property type="entry name" value="Anticodon-binding domain"/>
    <property type="match status" value="1"/>
</dbReference>
<dbReference type="Gene3D" id="3.30.930.10">
    <property type="entry name" value="Bira Bifunctional Protein, Domain 2"/>
    <property type="match status" value="2"/>
</dbReference>
<dbReference type="HAMAP" id="MF_01569">
    <property type="entry name" value="Pro_tRNA_synth_type1"/>
    <property type="match status" value="1"/>
</dbReference>
<dbReference type="InterPro" id="IPR002314">
    <property type="entry name" value="aa-tRNA-synt_IIb"/>
</dbReference>
<dbReference type="InterPro" id="IPR006195">
    <property type="entry name" value="aa-tRNA-synth_II"/>
</dbReference>
<dbReference type="InterPro" id="IPR045864">
    <property type="entry name" value="aa-tRNA-synth_II/BPL/LPL"/>
</dbReference>
<dbReference type="InterPro" id="IPR004154">
    <property type="entry name" value="Anticodon-bd"/>
</dbReference>
<dbReference type="InterPro" id="IPR036621">
    <property type="entry name" value="Anticodon-bd_dom_sf"/>
</dbReference>
<dbReference type="InterPro" id="IPR002316">
    <property type="entry name" value="Pro-tRNA-ligase_IIa"/>
</dbReference>
<dbReference type="InterPro" id="IPR004500">
    <property type="entry name" value="Pro-tRNA-synth_IIa_bac-type"/>
</dbReference>
<dbReference type="InterPro" id="IPR023717">
    <property type="entry name" value="Pro-tRNA-Synthase_IIa_type1"/>
</dbReference>
<dbReference type="InterPro" id="IPR050062">
    <property type="entry name" value="Pro-tRNA_synthetase"/>
</dbReference>
<dbReference type="InterPro" id="IPR044140">
    <property type="entry name" value="ProRS_anticodon_short"/>
</dbReference>
<dbReference type="InterPro" id="IPR033730">
    <property type="entry name" value="ProRS_core_prok"/>
</dbReference>
<dbReference type="InterPro" id="IPR036754">
    <property type="entry name" value="YbaK/aa-tRNA-synt-asso_dom_sf"/>
</dbReference>
<dbReference type="NCBIfam" id="NF006625">
    <property type="entry name" value="PRK09194.1"/>
    <property type="match status" value="1"/>
</dbReference>
<dbReference type="NCBIfam" id="TIGR00409">
    <property type="entry name" value="proS_fam_II"/>
    <property type="match status" value="1"/>
</dbReference>
<dbReference type="PANTHER" id="PTHR42753">
    <property type="entry name" value="MITOCHONDRIAL RIBOSOME PROTEIN L39/PROLYL-TRNA LIGASE FAMILY MEMBER"/>
    <property type="match status" value="1"/>
</dbReference>
<dbReference type="PANTHER" id="PTHR42753:SF2">
    <property type="entry name" value="PROLINE--TRNA LIGASE"/>
    <property type="match status" value="1"/>
</dbReference>
<dbReference type="Pfam" id="PF03129">
    <property type="entry name" value="HGTP_anticodon"/>
    <property type="match status" value="1"/>
</dbReference>
<dbReference type="Pfam" id="PF00587">
    <property type="entry name" value="tRNA-synt_2b"/>
    <property type="match status" value="1"/>
</dbReference>
<dbReference type="PRINTS" id="PR01046">
    <property type="entry name" value="TRNASYNTHPRO"/>
</dbReference>
<dbReference type="SUPFAM" id="SSF52954">
    <property type="entry name" value="Class II aaRS ABD-related"/>
    <property type="match status" value="1"/>
</dbReference>
<dbReference type="SUPFAM" id="SSF55681">
    <property type="entry name" value="Class II aaRS and biotin synthetases"/>
    <property type="match status" value="1"/>
</dbReference>
<dbReference type="SUPFAM" id="SSF55826">
    <property type="entry name" value="YbaK/ProRS associated domain"/>
    <property type="match status" value="1"/>
</dbReference>
<dbReference type="PROSITE" id="PS50862">
    <property type="entry name" value="AA_TRNA_LIGASE_II"/>
    <property type="match status" value="1"/>
</dbReference>
<reference key="1">
    <citation type="submission" date="2005-07" db="EMBL/GenBank/DDBJ databases">
        <title>Complete sequence of Synechococcus sp. CC9605.</title>
        <authorList>
            <consortium name="US DOE Joint Genome Institute"/>
            <person name="Copeland A."/>
            <person name="Lucas S."/>
            <person name="Lapidus A."/>
            <person name="Barry K."/>
            <person name="Detter J.C."/>
            <person name="Glavina T."/>
            <person name="Hammon N."/>
            <person name="Israni S."/>
            <person name="Pitluck S."/>
            <person name="Schmutz J."/>
            <person name="Martinez M."/>
            <person name="Larimer F."/>
            <person name="Land M."/>
            <person name="Kyrpides N."/>
            <person name="Ivanova N."/>
            <person name="Richardson P."/>
        </authorList>
    </citation>
    <scope>NUCLEOTIDE SEQUENCE [LARGE SCALE GENOMIC DNA]</scope>
    <source>
        <strain>CC9605</strain>
    </source>
</reference>
<comment type="function">
    <text evidence="1">Catalyzes the attachment of proline to tRNA(Pro) in a two-step reaction: proline is first activated by ATP to form Pro-AMP and then transferred to the acceptor end of tRNA(Pro). As ProRS can inadvertently accommodate and process non-cognate amino acids such as alanine and cysteine, to avoid such errors it has two additional distinct editing activities against alanine. One activity is designated as 'pretransfer' editing and involves the tRNA(Pro)-independent hydrolysis of activated Ala-AMP. The other activity is designated 'posttransfer' editing and involves deacylation of mischarged Ala-tRNA(Pro). The misacylated Cys-tRNA(Pro) is not edited by ProRS.</text>
</comment>
<comment type="catalytic activity">
    <reaction evidence="1">
        <text>tRNA(Pro) + L-proline + ATP = L-prolyl-tRNA(Pro) + AMP + diphosphate</text>
        <dbReference type="Rhea" id="RHEA:14305"/>
        <dbReference type="Rhea" id="RHEA-COMP:9700"/>
        <dbReference type="Rhea" id="RHEA-COMP:9702"/>
        <dbReference type="ChEBI" id="CHEBI:30616"/>
        <dbReference type="ChEBI" id="CHEBI:33019"/>
        <dbReference type="ChEBI" id="CHEBI:60039"/>
        <dbReference type="ChEBI" id="CHEBI:78442"/>
        <dbReference type="ChEBI" id="CHEBI:78532"/>
        <dbReference type="ChEBI" id="CHEBI:456215"/>
        <dbReference type="EC" id="6.1.1.15"/>
    </reaction>
</comment>
<comment type="subunit">
    <text evidence="1">Homodimer.</text>
</comment>
<comment type="subcellular location">
    <subcellularLocation>
        <location evidence="1">Cytoplasm</location>
    </subcellularLocation>
</comment>
<comment type="domain">
    <text evidence="1">Consists of three domains: the N-terminal catalytic domain, the editing domain and the C-terminal anticodon-binding domain.</text>
</comment>
<comment type="similarity">
    <text evidence="1">Belongs to the class-II aminoacyl-tRNA synthetase family. ProS type 1 subfamily.</text>
</comment>